<reference key="1">
    <citation type="journal article" date="2004" name="J. Bacteriol.">
        <title>Cloning and characterization of acetohydroxyacid synthase from Bacillus stearothermophilus.</title>
        <authorList>
            <person name="Porat I."/>
            <person name="Vinogradov M."/>
            <person name="Vyazmensky M."/>
            <person name="Lu C.-D."/>
            <person name="Chipman D.M."/>
            <person name="Abdelal A.T."/>
            <person name="Barak Z."/>
        </authorList>
    </citation>
    <scope>NUCLEOTIDE SEQUENCE [GENOMIC DNA]</scope>
    <source>
        <strain>ATCC 29609 / DSM 2027 / NCA 1503 / NCIMB 8924</strain>
    </source>
</reference>
<name>LEU1_GEOSE</name>
<organism>
    <name type="scientific">Geobacillus stearothermophilus</name>
    <name type="common">Bacillus stearothermophilus</name>
    <dbReference type="NCBI Taxonomy" id="1422"/>
    <lineage>
        <taxon>Bacteria</taxon>
        <taxon>Bacillati</taxon>
        <taxon>Bacillota</taxon>
        <taxon>Bacilli</taxon>
        <taxon>Bacillales</taxon>
        <taxon>Anoxybacillaceae</taxon>
        <taxon>Geobacillus</taxon>
    </lineage>
</organism>
<evidence type="ECO:0000255" key="1">
    <source>
        <dbReference type="HAMAP-Rule" id="MF_01025"/>
    </source>
</evidence>
<dbReference type="EC" id="2.3.3.13" evidence="1"/>
<dbReference type="EMBL" id="AY083837">
    <property type="protein sequence ID" value="AAL99359.1"/>
    <property type="molecule type" value="Genomic_DNA"/>
</dbReference>
<dbReference type="SMR" id="Q8RL85"/>
<dbReference type="UniPathway" id="UPA00048">
    <property type="reaction ID" value="UER00070"/>
</dbReference>
<dbReference type="GO" id="GO:0005737">
    <property type="term" value="C:cytoplasm"/>
    <property type="evidence" value="ECO:0007669"/>
    <property type="project" value="UniProtKB-SubCell"/>
</dbReference>
<dbReference type="GO" id="GO:0003852">
    <property type="term" value="F:2-isopropylmalate synthase activity"/>
    <property type="evidence" value="ECO:0007669"/>
    <property type="project" value="UniProtKB-UniRule"/>
</dbReference>
<dbReference type="GO" id="GO:0003985">
    <property type="term" value="F:acetyl-CoA C-acetyltransferase activity"/>
    <property type="evidence" value="ECO:0007669"/>
    <property type="project" value="UniProtKB-UniRule"/>
</dbReference>
<dbReference type="GO" id="GO:0030145">
    <property type="term" value="F:manganese ion binding"/>
    <property type="evidence" value="ECO:0007669"/>
    <property type="project" value="UniProtKB-UniRule"/>
</dbReference>
<dbReference type="GO" id="GO:0009098">
    <property type="term" value="P:L-leucine biosynthetic process"/>
    <property type="evidence" value="ECO:0007669"/>
    <property type="project" value="UniProtKB-UniRule"/>
</dbReference>
<dbReference type="CDD" id="cd07940">
    <property type="entry name" value="DRE_TIM_IPMS"/>
    <property type="match status" value="1"/>
</dbReference>
<dbReference type="FunFam" id="1.10.238.260:FF:000001">
    <property type="entry name" value="2-isopropylmalate synthase"/>
    <property type="match status" value="1"/>
</dbReference>
<dbReference type="FunFam" id="3.20.20.70:FF:000010">
    <property type="entry name" value="2-isopropylmalate synthase"/>
    <property type="match status" value="1"/>
</dbReference>
<dbReference type="FunFam" id="3.30.160.270:FF:000003">
    <property type="entry name" value="2-isopropylmalate synthase"/>
    <property type="match status" value="1"/>
</dbReference>
<dbReference type="Gene3D" id="1.10.238.260">
    <property type="match status" value="1"/>
</dbReference>
<dbReference type="Gene3D" id="3.30.160.270">
    <property type="match status" value="1"/>
</dbReference>
<dbReference type="Gene3D" id="3.20.20.70">
    <property type="entry name" value="Aldolase class I"/>
    <property type="match status" value="1"/>
</dbReference>
<dbReference type="HAMAP" id="MF_01025">
    <property type="entry name" value="LeuA_type1"/>
    <property type="match status" value="1"/>
</dbReference>
<dbReference type="InterPro" id="IPR050073">
    <property type="entry name" value="2-IPM_HCS-like"/>
</dbReference>
<dbReference type="InterPro" id="IPR013709">
    <property type="entry name" value="2-isopropylmalate_synth_dimer"/>
</dbReference>
<dbReference type="InterPro" id="IPR002034">
    <property type="entry name" value="AIPM/Hcit_synth_CS"/>
</dbReference>
<dbReference type="InterPro" id="IPR013785">
    <property type="entry name" value="Aldolase_TIM"/>
</dbReference>
<dbReference type="InterPro" id="IPR054691">
    <property type="entry name" value="LeuA/HCS_post-cat"/>
</dbReference>
<dbReference type="InterPro" id="IPR036230">
    <property type="entry name" value="LeuA_allosteric_dom_sf"/>
</dbReference>
<dbReference type="InterPro" id="IPR005671">
    <property type="entry name" value="LeuA_bact_synth"/>
</dbReference>
<dbReference type="InterPro" id="IPR000891">
    <property type="entry name" value="PYR_CT"/>
</dbReference>
<dbReference type="NCBIfam" id="TIGR00973">
    <property type="entry name" value="leuA_bact"/>
    <property type="match status" value="1"/>
</dbReference>
<dbReference type="NCBIfam" id="NF002086">
    <property type="entry name" value="PRK00915.1-3"/>
    <property type="match status" value="1"/>
</dbReference>
<dbReference type="NCBIfam" id="NF002088">
    <property type="entry name" value="PRK00915.1-5"/>
    <property type="match status" value="1"/>
</dbReference>
<dbReference type="PANTHER" id="PTHR10277:SF9">
    <property type="entry name" value="2-ISOPROPYLMALATE SYNTHASE 1, CHLOROPLASTIC-RELATED"/>
    <property type="match status" value="1"/>
</dbReference>
<dbReference type="PANTHER" id="PTHR10277">
    <property type="entry name" value="HOMOCITRATE SYNTHASE-RELATED"/>
    <property type="match status" value="1"/>
</dbReference>
<dbReference type="Pfam" id="PF22617">
    <property type="entry name" value="HCS_D2"/>
    <property type="match status" value="1"/>
</dbReference>
<dbReference type="Pfam" id="PF00682">
    <property type="entry name" value="HMGL-like"/>
    <property type="match status" value="1"/>
</dbReference>
<dbReference type="Pfam" id="PF08502">
    <property type="entry name" value="LeuA_dimer"/>
    <property type="match status" value="1"/>
</dbReference>
<dbReference type="SMART" id="SM00917">
    <property type="entry name" value="LeuA_dimer"/>
    <property type="match status" value="1"/>
</dbReference>
<dbReference type="SUPFAM" id="SSF110921">
    <property type="entry name" value="2-isopropylmalate synthase LeuA, allosteric (dimerisation) domain"/>
    <property type="match status" value="1"/>
</dbReference>
<dbReference type="SUPFAM" id="SSF51569">
    <property type="entry name" value="Aldolase"/>
    <property type="match status" value="1"/>
</dbReference>
<dbReference type="PROSITE" id="PS00815">
    <property type="entry name" value="AIPM_HOMOCIT_SYNTH_1"/>
    <property type="match status" value="1"/>
</dbReference>
<dbReference type="PROSITE" id="PS50991">
    <property type="entry name" value="PYR_CT"/>
    <property type="match status" value="1"/>
</dbReference>
<protein>
    <recommendedName>
        <fullName evidence="1">2-isopropylmalate synthase</fullName>
        <ecNumber evidence="1">2.3.3.13</ecNumber>
    </recommendedName>
    <alternativeName>
        <fullName evidence="1">Alpha-IPM synthase</fullName>
    </alternativeName>
    <alternativeName>
        <fullName evidence="1">Alpha-isopropylmalate synthase</fullName>
    </alternativeName>
</protein>
<sequence>MRNIKFFDTTLRDGEQSAGVNLNLQEKLEIARQLERLRVDIIEAGFPASSKGDFEAVKQIAETVRTCSVTGLSRSVRSDIDAAWEALKGGAEPRLHLFIATSPIHMVHKLRMTPEQVIEAAVEAVKYAKRFFPIVQWSAEDACRSELPFLAKIVAEVIKAGASVINIPDTVGYITPKEYGEIFLYLQNNVQNIENVSLSAHCHDDLGMAVVNSLSAIEHGATQVECTINGIGERAGNAALEEIAVALHIRKDYYQVETRLNLQEIKRTSNLVSKLTGVVVPPNKAVVGKNAFAHESGIHQDGVLKEKTTYEIISPELVGVPSNSMVLGKNSGRHALRYRVEELGYTLSDEEINQLFVRFKELADKKKDITDDDLIALIFEEKFDHFKDFYQLSSIQVQYGTNQIPTAVVVLKYGKGNEIQEAATGSGSVYALYNTLERCFQTEVTLLDYRIESVGGGRDALAQVFVKVRVRDVETSGRGTAQDVLEASAKAYINAMNRVFMIEAMRAENEKVATS</sequence>
<accession>Q8RL85</accession>
<keyword id="KW-0028">Amino-acid biosynthesis</keyword>
<keyword id="KW-0100">Branched-chain amino acid biosynthesis</keyword>
<keyword id="KW-0963">Cytoplasm</keyword>
<keyword id="KW-0432">Leucine biosynthesis</keyword>
<keyword id="KW-0464">Manganese</keyword>
<keyword id="KW-0479">Metal-binding</keyword>
<keyword id="KW-0808">Transferase</keyword>
<comment type="function">
    <text evidence="1">Catalyzes the condensation of the acetyl group of acetyl-CoA with 3-methyl-2-oxobutanoate (2-ketoisovalerate) to form 3-carboxy-3-hydroxy-4-methylpentanoate (2-isopropylmalate).</text>
</comment>
<comment type="catalytic activity">
    <reaction evidence="1">
        <text>3-methyl-2-oxobutanoate + acetyl-CoA + H2O = (2S)-2-isopropylmalate + CoA + H(+)</text>
        <dbReference type="Rhea" id="RHEA:21524"/>
        <dbReference type="ChEBI" id="CHEBI:1178"/>
        <dbReference type="ChEBI" id="CHEBI:11851"/>
        <dbReference type="ChEBI" id="CHEBI:15377"/>
        <dbReference type="ChEBI" id="CHEBI:15378"/>
        <dbReference type="ChEBI" id="CHEBI:57287"/>
        <dbReference type="ChEBI" id="CHEBI:57288"/>
        <dbReference type="EC" id="2.3.3.13"/>
    </reaction>
</comment>
<comment type="cofactor">
    <cofactor evidence="1">
        <name>Mn(2+)</name>
        <dbReference type="ChEBI" id="CHEBI:29035"/>
    </cofactor>
</comment>
<comment type="pathway">
    <text evidence="1">Amino-acid biosynthesis; L-leucine biosynthesis; L-leucine from 3-methyl-2-oxobutanoate: step 1/4.</text>
</comment>
<comment type="subunit">
    <text evidence="1">Homodimer.</text>
</comment>
<comment type="subcellular location">
    <subcellularLocation>
        <location evidence="1">Cytoplasm</location>
    </subcellularLocation>
</comment>
<comment type="similarity">
    <text evidence="1">Belongs to the alpha-IPM synthase/homocitrate synthase family. LeuA type 1 subfamily.</text>
</comment>
<gene>
    <name evidence="1" type="primary">leuA</name>
</gene>
<proteinExistence type="inferred from homology"/>
<feature type="chain" id="PRO_0000140331" description="2-isopropylmalate synthase">
    <location>
        <begin position="1"/>
        <end position="515"/>
    </location>
</feature>
<feature type="domain" description="Pyruvate carboxyltransferase" evidence="1">
    <location>
        <begin position="4"/>
        <end position="266"/>
    </location>
</feature>
<feature type="region of interest" description="Regulatory domain" evidence="1">
    <location>
        <begin position="391"/>
        <end position="515"/>
    </location>
</feature>
<feature type="binding site" evidence="1">
    <location>
        <position position="13"/>
    </location>
    <ligand>
        <name>Mn(2+)</name>
        <dbReference type="ChEBI" id="CHEBI:29035"/>
    </ligand>
</feature>
<feature type="binding site" evidence="1">
    <location>
        <position position="201"/>
    </location>
    <ligand>
        <name>Mn(2+)</name>
        <dbReference type="ChEBI" id="CHEBI:29035"/>
    </ligand>
</feature>
<feature type="binding site" evidence="1">
    <location>
        <position position="203"/>
    </location>
    <ligand>
        <name>Mn(2+)</name>
        <dbReference type="ChEBI" id="CHEBI:29035"/>
    </ligand>
</feature>
<feature type="binding site" evidence="1">
    <location>
        <position position="237"/>
    </location>
    <ligand>
        <name>Mn(2+)</name>
        <dbReference type="ChEBI" id="CHEBI:29035"/>
    </ligand>
</feature>